<gene>
    <name evidence="1" type="primary">nadK</name>
    <name type="ordered locus">GAU_1865</name>
</gene>
<proteinExistence type="inferred from homology"/>
<evidence type="ECO:0000255" key="1">
    <source>
        <dbReference type="HAMAP-Rule" id="MF_00361"/>
    </source>
</evidence>
<name>NADK_GEMAT</name>
<reference key="1">
    <citation type="submission" date="2006-03" db="EMBL/GenBank/DDBJ databases">
        <title>Complete genome sequence of Gemmatimonas aurantiaca T-27 that represents a novel phylum Gemmatimonadetes.</title>
        <authorList>
            <person name="Takasaki K."/>
            <person name="Ichikawa N."/>
            <person name="Miura H."/>
            <person name="Matsushita S."/>
            <person name="Watanabe Y."/>
            <person name="Oguchi A."/>
            <person name="Ankai A."/>
            <person name="Yashiro I."/>
            <person name="Takahashi M."/>
            <person name="Terui Y."/>
            <person name="Fukui S."/>
            <person name="Yokoyama H."/>
            <person name="Tanikawa S."/>
            <person name="Hanada S."/>
            <person name="Kamagata Y."/>
            <person name="Fujita N."/>
        </authorList>
    </citation>
    <scope>NUCLEOTIDE SEQUENCE [LARGE SCALE GENOMIC DNA]</scope>
    <source>
        <strain>DSM 14586 / JCM 11422 / NBRC 100505 / T-27</strain>
    </source>
</reference>
<accession>C1A482</accession>
<keyword id="KW-0067">ATP-binding</keyword>
<keyword id="KW-0963">Cytoplasm</keyword>
<keyword id="KW-0418">Kinase</keyword>
<keyword id="KW-0520">NAD</keyword>
<keyword id="KW-0521">NADP</keyword>
<keyword id="KW-0547">Nucleotide-binding</keyword>
<keyword id="KW-1185">Reference proteome</keyword>
<keyword id="KW-0808">Transferase</keyword>
<sequence length="289" mass="30966">MRVGVVGHRGYVGLPAVLNTLLDSAPALNFTLAFEEELWDMAEEGERLTQDTPIDAMITLGGDGTLLRGARLVNGRKIPILGVNFGRLGFLTSCSADEMEDGVQRLARGDFVSEPRMVLESCAIDGDRSERCRWRALNDVVMHKGGFARLVKFSVLVDGEHIGSYSADGLIISTPTGSTGYSLSAGGPIVMPTFESIVLTPVSPHTLAMRPLVLPADVEVTVRADDGPEELLVTVDGQVGTTFTGGETLIVRRAPEPVHIVRLPGATFFTRLRHKLGWGGLSGRDGEAT</sequence>
<protein>
    <recommendedName>
        <fullName evidence="1">NAD kinase</fullName>
        <ecNumber evidence="1">2.7.1.23</ecNumber>
    </recommendedName>
    <alternativeName>
        <fullName evidence="1">ATP-dependent NAD kinase</fullName>
    </alternativeName>
</protein>
<feature type="chain" id="PRO_1000205418" description="NAD kinase">
    <location>
        <begin position="1"/>
        <end position="289"/>
    </location>
</feature>
<feature type="active site" description="Proton acceptor" evidence="1">
    <location>
        <position position="63"/>
    </location>
</feature>
<feature type="binding site" evidence="1">
    <location>
        <begin position="63"/>
        <end position="64"/>
    </location>
    <ligand>
        <name>NAD(+)</name>
        <dbReference type="ChEBI" id="CHEBI:57540"/>
    </ligand>
</feature>
<feature type="binding site" evidence="1">
    <location>
        <position position="68"/>
    </location>
    <ligand>
        <name>NAD(+)</name>
        <dbReference type="ChEBI" id="CHEBI:57540"/>
    </ligand>
</feature>
<feature type="binding site" evidence="1">
    <location>
        <begin position="138"/>
        <end position="139"/>
    </location>
    <ligand>
        <name>NAD(+)</name>
        <dbReference type="ChEBI" id="CHEBI:57540"/>
    </ligand>
</feature>
<feature type="binding site" evidence="1">
    <location>
        <position position="149"/>
    </location>
    <ligand>
        <name>NAD(+)</name>
        <dbReference type="ChEBI" id="CHEBI:57540"/>
    </ligand>
</feature>
<feature type="binding site" evidence="1">
    <location>
        <position position="168"/>
    </location>
    <ligand>
        <name>NAD(+)</name>
        <dbReference type="ChEBI" id="CHEBI:57540"/>
    </ligand>
</feature>
<feature type="binding site" evidence="1">
    <location>
        <begin position="179"/>
        <end position="184"/>
    </location>
    <ligand>
        <name>NAD(+)</name>
        <dbReference type="ChEBI" id="CHEBI:57540"/>
    </ligand>
</feature>
<feature type="binding site" evidence="1">
    <location>
        <position position="238"/>
    </location>
    <ligand>
        <name>NAD(+)</name>
        <dbReference type="ChEBI" id="CHEBI:57540"/>
    </ligand>
</feature>
<comment type="function">
    <text evidence="1">Involved in the regulation of the intracellular balance of NAD and NADP, and is a key enzyme in the biosynthesis of NADP. Catalyzes specifically the phosphorylation on 2'-hydroxyl of the adenosine moiety of NAD to yield NADP.</text>
</comment>
<comment type="catalytic activity">
    <reaction evidence="1">
        <text>NAD(+) + ATP = ADP + NADP(+) + H(+)</text>
        <dbReference type="Rhea" id="RHEA:18629"/>
        <dbReference type="ChEBI" id="CHEBI:15378"/>
        <dbReference type="ChEBI" id="CHEBI:30616"/>
        <dbReference type="ChEBI" id="CHEBI:57540"/>
        <dbReference type="ChEBI" id="CHEBI:58349"/>
        <dbReference type="ChEBI" id="CHEBI:456216"/>
        <dbReference type="EC" id="2.7.1.23"/>
    </reaction>
</comment>
<comment type="cofactor">
    <cofactor evidence="1">
        <name>a divalent metal cation</name>
        <dbReference type="ChEBI" id="CHEBI:60240"/>
    </cofactor>
</comment>
<comment type="subcellular location">
    <subcellularLocation>
        <location evidence="1">Cytoplasm</location>
    </subcellularLocation>
</comment>
<comment type="similarity">
    <text evidence="1">Belongs to the NAD kinase family.</text>
</comment>
<organism>
    <name type="scientific">Gemmatimonas aurantiaca (strain DSM 14586 / JCM 11422 / NBRC 100505 / T-27)</name>
    <dbReference type="NCBI Taxonomy" id="379066"/>
    <lineage>
        <taxon>Bacteria</taxon>
        <taxon>Pseudomonadati</taxon>
        <taxon>Gemmatimonadota</taxon>
        <taxon>Gemmatimonadia</taxon>
        <taxon>Gemmatimonadales</taxon>
        <taxon>Gemmatimonadaceae</taxon>
        <taxon>Gemmatimonas</taxon>
    </lineage>
</organism>
<dbReference type="EC" id="2.7.1.23" evidence="1"/>
<dbReference type="EMBL" id="AP009153">
    <property type="protein sequence ID" value="BAH38907.1"/>
    <property type="molecule type" value="Genomic_DNA"/>
</dbReference>
<dbReference type="RefSeq" id="WP_012683354.1">
    <property type="nucleotide sequence ID" value="NC_012489.1"/>
</dbReference>
<dbReference type="SMR" id="C1A482"/>
<dbReference type="STRING" id="379066.GAU_1865"/>
<dbReference type="KEGG" id="gau:GAU_1865"/>
<dbReference type="eggNOG" id="COG0061">
    <property type="taxonomic scope" value="Bacteria"/>
</dbReference>
<dbReference type="HOGENOM" id="CLU_008831_0_0_0"/>
<dbReference type="OrthoDB" id="9774737at2"/>
<dbReference type="Proteomes" id="UP000002209">
    <property type="component" value="Chromosome"/>
</dbReference>
<dbReference type="GO" id="GO:0005737">
    <property type="term" value="C:cytoplasm"/>
    <property type="evidence" value="ECO:0007669"/>
    <property type="project" value="UniProtKB-SubCell"/>
</dbReference>
<dbReference type="GO" id="GO:0005524">
    <property type="term" value="F:ATP binding"/>
    <property type="evidence" value="ECO:0007669"/>
    <property type="project" value="UniProtKB-KW"/>
</dbReference>
<dbReference type="GO" id="GO:0046872">
    <property type="term" value="F:metal ion binding"/>
    <property type="evidence" value="ECO:0007669"/>
    <property type="project" value="UniProtKB-UniRule"/>
</dbReference>
<dbReference type="GO" id="GO:0051287">
    <property type="term" value="F:NAD binding"/>
    <property type="evidence" value="ECO:0007669"/>
    <property type="project" value="UniProtKB-ARBA"/>
</dbReference>
<dbReference type="GO" id="GO:0003951">
    <property type="term" value="F:NAD+ kinase activity"/>
    <property type="evidence" value="ECO:0007669"/>
    <property type="project" value="UniProtKB-UniRule"/>
</dbReference>
<dbReference type="GO" id="GO:0019674">
    <property type="term" value="P:NAD metabolic process"/>
    <property type="evidence" value="ECO:0007669"/>
    <property type="project" value="InterPro"/>
</dbReference>
<dbReference type="GO" id="GO:0006741">
    <property type="term" value="P:NADP biosynthetic process"/>
    <property type="evidence" value="ECO:0007669"/>
    <property type="project" value="UniProtKB-UniRule"/>
</dbReference>
<dbReference type="FunFam" id="2.60.200.30:FF:000009">
    <property type="entry name" value="Poly(P)/ATP NAD kinase"/>
    <property type="match status" value="1"/>
</dbReference>
<dbReference type="Gene3D" id="3.40.50.10330">
    <property type="entry name" value="Probable inorganic polyphosphate/atp-NAD kinase, domain 1"/>
    <property type="match status" value="1"/>
</dbReference>
<dbReference type="Gene3D" id="2.60.200.30">
    <property type="entry name" value="Probable inorganic polyphosphate/atp-NAD kinase, domain 2"/>
    <property type="match status" value="1"/>
</dbReference>
<dbReference type="HAMAP" id="MF_00361">
    <property type="entry name" value="NAD_kinase"/>
    <property type="match status" value="1"/>
</dbReference>
<dbReference type="InterPro" id="IPR017438">
    <property type="entry name" value="ATP-NAD_kinase_N"/>
</dbReference>
<dbReference type="InterPro" id="IPR017437">
    <property type="entry name" value="ATP-NAD_kinase_PpnK-typ_C"/>
</dbReference>
<dbReference type="InterPro" id="IPR016064">
    <property type="entry name" value="NAD/diacylglycerol_kinase_sf"/>
</dbReference>
<dbReference type="InterPro" id="IPR002504">
    <property type="entry name" value="NADK"/>
</dbReference>
<dbReference type="PANTHER" id="PTHR20275">
    <property type="entry name" value="NAD KINASE"/>
    <property type="match status" value="1"/>
</dbReference>
<dbReference type="PANTHER" id="PTHR20275:SF0">
    <property type="entry name" value="NAD KINASE"/>
    <property type="match status" value="1"/>
</dbReference>
<dbReference type="Pfam" id="PF01513">
    <property type="entry name" value="NAD_kinase"/>
    <property type="match status" value="1"/>
</dbReference>
<dbReference type="Pfam" id="PF20143">
    <property type="entry name" value="NAD_kinase_C"/>
    <property type="match status" value="1"/>
</dbReference>
<dbReference type="SUPFAM" id="SSF111331">
    <property type="entry name" value="NAD kinase/diacylglycerol kinase-like"/>
    <property type="match status" value="1"/>
</dbReference>